<sequence length="366" mass="39215">MEGKTTMKGLAMLGIGRIGWIEKKIPECGPLDALVRPLALAPCTSDTHTVWAGAIGDRHDMILGHEAVGQIVKVGSLVKRLKVGDKVIVPAITPDWGEEESQRGYPMHSGGMLGGWKFSNFKDGVFSEVFHVNEADANLALLPRDIKPEDAVMLSDMVTTGFHGAELANIKLGDTVCVIGIGPVGLMSVAGANHLGAGRIFAVGSRKHCCDIALEYGATDIINYKNGDIVEQILKATDGKGVDKVVIAGGDVHTFAQAVKMIKPGSDIGNVNYLGEGDNIDIPRSEWGVGMGHKHIHGGLTPGGRVRMEKLASLISTGKLDTSKLITHRFEGLEKVEDALMLMKNKPADLIKPVVRIHYDDEDTLH</sequence>
<comment type="function">
    <text evidence="4">Alcohol dehydrogenase with a preference for medium chain secondary alcohols, such as 2-butanol and isopropanol. Has very low activity with primary alcohols, such as ethanol. Under physiological conditions, the enzyme reduces aldehydes and 2-ketones to produce secondary alcohols. Is also active with acetaldehyde and propionaldehyde.</text>
</comment>
<comment type="catalytic activity">
    <reaction evidence="4">
        <text>propan-2-ol + NADP(+) = acetone + NADPH + H(+)</text>
        <dbReference type="Rhea" id="RHEA:21792"/>
        <dbReference type="ChEBI" id="CHEBI:15347"/>
        <dbReference type="ChEBI" id="CHEBI:15378"/>
        <dbReference type="ChEBI" id="CHEBI:17824"/>
        <dbReference type="ChEBI" id="CHEBI:57783"/>
        <dbReference type="ChEBI" id="CHEBI:58349"/>
        <dbReference type="EC" id="1.1.1.80"/>
    </reaction>
</comment>
<comment type="cofactor">
    <cofactor evidence="4">
        <name>Zn(2+)</name>
        <dbReference type="ChEBI" id="CHEBI:29105"/>
    </cofactor>
    <text evidence="4">Binds 1 zinc ion per subunit.</text>
</comment>
<comment type="subunit">
    <text evidence="2 3 4">Homodimer.</text>
</comment>
<comment type="subcellular location">
    <subcellularLocation>
        <location>Cytoplasm</location>
    </subcellularLocation>
</comment>
<comment type="similarity">
    <text evidence="6">Belongs to the zinc-containing alcohol dehydrogenase family.</text>
</comment>
<proteinExistence type="evidence at protein level"/>
<feature type="chain" id="PRO_0000160695" description="NADP-dependent isopropanol dehydrogenase">
    <location>
        <begin position="1"/>
        <end position="366"/>
    </location>
</feature>
<feature type="binding site" evidence="4">
    <location>
        <position position="43"/>
    </location>
    <ligand>
        <name>Zn(2+)</name>
        <dbReference type="ChEBI" id="CHEBI:29105"/>
        <note>catalytic</note>
    </ligand>
</feature>
<feature type="binding site" evidence="4">
    <location>
        <position position="65"/>
    </location>
    <ligand>
        <name>Zn(2+)</name>
        <dbReference type="ChEBI" id="CHEBI:29105"/>
        <note>catalytic</note>
    </ligand>
</feature>
<feature type="binding site" evidence="4">
    <location>
        <position position="66"/>
    </location>
    <ligand>
        <name>Zn(2+)</name>
        <dbReference type="ChEBI" id="CHEBI:29105"/>
        <note>catalytic</note>
    </ligand>
</feature>
<feature type="binding site" evidence="4">
    <location>
        <position position="156"/>
    </location>
    <ligand>
        <name>Zn(2+)</name>
        <dbReference type="ChEBI" id="CHEBI:29105"/>
        <note>catalytic</note>
    </ligand>
</feature>
<feature type="binding site" evidence="1">
    <location>
        <begin position="181"/>
        <end position="184"/>
    </location>
    <ligand>
        <name>NADP(+)</name>
        <dbReference type="ChEBI" id="CHEBI:58349"/>
    </ligand>
</feature>
<feature type="binding site" evidence="1">
    <location>
        <begin position="204"/>
        <end position="206"/>
    </location>
    <ligand>
        <name>NADP(+)</name>
        <dbReference type="ChEBI" id="CHEBI:58349"/>
    </ligand>
</feature>
<feature type="binding site" evidence="1">
    <location>
        <position position="224"/>
    </location>
    <ligand>
        <name>NADP(+)</name>
        <dbReference type="ChEBI" id="CHEBI:58349"/>
    </ligand>
</feature>
<feature type="binding site" evidence="1">
    <location>
        <begin position="271"/>
        <end position="273"/>
    </location>
    <ligand>
        <name>NADP(+)</name>
        <dbReference type="ChEBI" id="CHEBI:58349"/>
    </ligand>
</feature>
<feature type="binding site" evidence="1">
    <location>
        <position position="346"/>
    </location>
    <ligand>
        <name>NADP(+)</name>
        <dbReference type="ChEBI" id="CHEBI:58349"/>
    </ligand>
</feature>
<feature type="strand" evidence="9">
    <location>
        <begin position="8"/>
        <end position="14"/>
    </location>
</feature>
<feature type="strand" evidence="9">
    <location>
        <begin position="17"/>
        <end position="22"/>
    </location>
</feature>
<feature type="strand" evidence="9">
    <location>
        <begin position="33"/>
        <end position="40"/>
    </location>
</feature>
<feature type="helix" evidence="9">
    <location>
        <begin position="44"/>
        <end position="51"/>
    </location>
</feature>
<feature type="strand" evidence="9">
    <location>
        <begin position="59"/>
        <end position="62"/>
    </location>
</feature>
<feature type="strand" evidence="9">
    <location>
        <begin position="67"/>
        <end position="74"/>
    </location>
</feature>
<feature type="strand" evidence="9">
    <location>
        <begin position="86"/>
        <end position="89"/>
    </location>
</feature>
<feature type="helix" evidence="9">
    <location>
        <begin position="99"/>
        <end position="102"/>
    </location>
</feature>
<feature type="helix" evidence="9">
    <location>
        <begin position="106"/>
        <end position="108"/>
    </location>
</feature>
<feature type="turn" evidence="9">
    <location>
        <begin position="112"/>
        <end position="115"/>
    </location>
</feature>
<feature type="turn" evidence="9">
    <location>
        <begin position="119"/>
        <end position="121"/>
    </location>
</feature>
<feature type="strand" evidence="9">
    <location>
        <begin position="125"/>
        <end position="134"/>
    </location>
</feature>
<feature type="helix" evidence="9">
    <location>
        <begin position="135"/>
        <end position="138"/>
    </location>
</feature>
<feature type="helix" evidence="9">
    <location>
        <begin position="148"/>
        <end position="151"/>
    </location>
</feature>
<feature type="helix" evidence="9">
    <location>
        <begin position="152"/>
        <end position="154"/>
    </location>
</feature>
<feature type="helix" evidence="9">
    <location>
        <begin position="157"/>
        <end position="167"/>
    </location>
</feature>
<feature type="strand" evidence="10">
    <location>
        <begin position="176"/>
        <end position="179"/>
    </location>
</feature>
<feature type="helix" evidence="10">
    <location>
        <begin position="183"/>
        <end position="193"/>
    </location>
</feature>
<feature type="turn" evidence="10">
    <location>
        <begin position="194"/>
        <end position="196"/>
    </location>
</feature>
<feature type="strand" evidence="10">
    <location>
        <begin position="198"/>
        <end position="203"/>
    </location>
</feature>
<feature type="helix" evidence="10">
    <location>
        <begin position="207"/>
        <end position="216"/>
    </location>
</feature>
<feature type="strand" evidence="10">
    <location>
        <begin position="220"/>
        <end position="222"/>
    </location>
</feature>
<feature type="helix" evidence="10">
    <location>
        <begin position="224"/>
        <end position="226"/>
    </location>
</feature>
<feature type="helix" evidence="10">
    <location>
        <begin position="229"/>
        <end position="236"/>
    </location>
</feature>
<feature type="turn" evidence="10">
    <location>
        <begin position="237"/>
        <end position="239"/>
    </location>
</feature>
<feature type="strand" evidence="10">
    <location>
        <begin position="242"/>
        <end position="247"/>
    </location>
</feature>
<feature type="helix" evidence="10">
    <location>
        <begin position="254"/>
        <end position="261"/>
    </location>
</feature>
<feature type="strand" evidence="10">
    <location>
        <begin position="262"/>
        <end position="270"/>
    </location>
</feature>
<feature type="strand" evidence="10">
    <location>
        <begin position="278"/>
        <end position="283"/>
    </location>
</feature>
<feature type="turn" evidence="10">
    <location>
        <begin position="284"/>
        <end position="287"/>
    </location>
</feature>
<feature type="helix" evidence="10">
    <location>
        <begin position="288"/>
        <end position="290"/>
    </location>
</feature>
<feature type="strand" evidence="10">
    <location>
        <begin position="294"/>
        <end position="299"/>
    </location>
</feature>
<feature type="helix" evidence="9">
    <location>
        <begin position="304"/>
        <end position="316"/>
    </location>
</feature>
<feature type="helix" evidence="9">
    <location>
        <begin position="323"/>
        <end position="325"/>
    </location>
</feature>
<feature type="strand" evidence="9">
    <location>
        <begin position="326"/>
        <end position="332"/>
    </location>
</feature>
<feature type="helix" evidence="9">
    <location>
        <begin position="335"/>
        <end position="345"/>
    </location>
</feature>
<feature type="strand" evidence="9">
    <location>
        <begin position="351"/>
        <end position="356"/>
    </location>
</feature>
<feature type="turn" evidence="9">
    <location>
        <begin position="360"/>
        <end position="364"/>
    </location>
</feature>
<accession>P35630</accession>
<accession>A0A175JFZ6</accession>
<accession>C4LUM3</accession>
<protein>
    <recommendedName>
        <fullName evidence="5">NADP-dependent isopropanol dehydrogenase</fullName>
        <shortName evidence="5">EhADH1</shortName>
        <ecNumber evidence="4">1.1.1.80</ecNumber>
    </recommendedName>
</protein>
<gene>
    <name evidence="5" type="primary">ADH1</name>
    <name evidence="8" type="ORF">EHI_023110</name>
</gene>
<organism evidence="8">
    <name type="scientific">Entamoeba histolytica (strain ATCC 30459 / HM-1:IMSS / ABRM)</name>
    <dbReference type="NCBI Taxonomy" id="294381"/>
    <lineage>
        <taxon>Eukaryota</taxon>
        <taxon>Amoebozoa</taxon>
        <taxon>Evosea</taxon>
        <taxon>Archamoebae</taxon>
        <taxon>Mastigamoebida</taxon>
        <taxon>Entamoebidae</taxon>
        <taxon>Entamoeba</taxon>
    </lineage>
</organism>
<name>ADH1_ENTH1</name>
<reference evidence="7" key="1">
    <citation type="journal article" date="1992" name="Proc. Natl. Acad. Sci. U.S.A.">
        <title>Cloning and expression of an NADP(+)-dependent alcohol dehydrogenase gene of Entamoeba histolytica.</title>
        <authorList>
            <person name="Kumar A."/>
            <person name="Shen P.S."/>
            <person name="Descoteaux S."/>
            <person name="Pohl J."/>
            <person name="Bailey G."/>
            <person name="Samuelson J."/>
        </authorList>
    </citation>
    <scope>NUCLEOTIDE SEQUENCE [MRNA] OF 7-366</scope>
    <scope>PARTIAL PROTEIN SEQUENCE</scope>
</reference>
<reference evidence="7" key="2">
    <citation type="journal article" date="1992" name="Arch. Med. Res.">
        <title>Primary structures of alcohol and aldehyde dehydrogenase genes of Entamoeba histolytica.</title>
        <authorList>
            <person name="Samuelson J."/>
            <person name="Zhang W.W."/>
            <person name="Kumar A."/>
            <person name="Descoteaux S."/>
            <person name="Shen P.S."/>
            <person name="Bailey G."/>
        </authorList>
    </citation>
    <scope>NUCLEOTIDE SEQUENCE [MRNA] OF 7-366</scope>
</reference>
<reference evidence="8" key="3">
    <citation type="journal article" date="2005" name="Nature">
        <title>The genome of the protist parasite Entamoeba histolytica.</title>
        <authorList>
            <person name="Loftus B.J."/>
            <person name="Anderson I."/>
            <person name="Davies R."/>
            <person name="Alsmark U.C."/>
            <person name="Samuelson J."/>
            <person name="Amedeo P."/>
            <person name="Roncaglia P."/>
            <person name="Berriman M."/>
            <person name="Hirt R.P."/>
            <person name="Mann B.J."/>
            <person name="Nozaki T."/>
            <person name="Suh B."/>
            <person name="Pop M."/>
            <person name="Duchene M."/>
            <person name="Ackers J."/>
            <person name="Tannich E."/>
            <person name="Leippe M."/>
            <person name="Hofer M."/>
            <person name="Bruchhaus I."/>
            <person name="Willhoeft U."/>
            <person name="Bhattacharya A."/>
            <person name="Chillingworth T."/>
            <person name="Churcher C.M."/>
            <person name="Hance Z."/>
            <person name="Harris B."/>
            <person name="Harris D."/>
            <person name="Jagels K."/>
            <person name="Moule S."/>
            <person name="Mungall K.L."/>
            <person name="Ormond D."/>
            <person name="Squares R."/>
            <person name="Whitehead S."/>
            <person name="Quail M.A."/>
            <person name="Rabbinowitsch E."/>
            <person name="Norbertczak H."/>
            <person name="Price C."/>
            <person name="Wang Z."/>
            <person name="Guillen N."/>
            <person name="Gilchrist C."/>
            <person name="Stroup S.E."/>
            <person name="Bhattacharya S."/>
            <person name="Lohia A."/>
            <person name="Foster P.G."/>
            <person name="Sicheritz-Ponten T."/>
            <person name="Weber C."/>
            <person name="Singh U."/>
            <person name="Mukherjee C."/>
            <person name="El-Sayed N.M.A."/>
            <person name="Petri W.A."/>
            <person name="Clark C.G."/>
            <person name="Embley T.M."/>
            <person name="Barrell B.G."/>
            <person name="Fraser C.M."/>
            <person name="Hall N."/>
        </authorList>
    </citation>
    <scope>NUCLEOTIDE SEQUENCE [LARGE SCALE GENOMIC DNA]</scope>
    <source>
        <strain evidence="8">ATCC 30459 / HM-1:IMSS / ABRM</strain>
    </source>
</reference>
<reference key="4">
    <citation type="journal article" date="2006" name="Acta Crystallogr. D">
        <title>Structure of alcohol dehydrogenase from Entamoeba histolytica.</title>
        <authorList>
            <person name="Shimon L.J.W."/>
            <person name="Goihberg E."/>
            <person name="Peretz M."/>
            <person name="Burstein Y."/>
            <person name="Frolow F."/>
        </authorList>
    </citation>
    <scope>X-RAY CRYSTALLOGRAPHY (1.81 ANGSTROMS) IN COMPLEX WITH ZINC IONS</scope>
    <scope>SUBUNIT</scope>
</reference>
<reference key="5">
    <citation type="journal article" date="2008" name="Proteins">
        <title>Thermal stabilization of the protozoan Entamoeba histolytica alcohol dehydrogenase by a single proline substitution.</title>
        <authorList>
            <person name="Goihberg E."/>
            <person name="Dym O."/>
            <person name="Tel-Or S."/>
            <person name="Shimon L."/>
            <person name="Frolow F."/>
            <person name="Peretz M."/>
            <person name="Burstein Y."/>
        </authorList>
    </citation>
    <scope>X-RAY CRYSTALLOGRAPHY (1.77 ANGSTROMS) IN COMPLEX WITH ZINC IONS</scope>
</reference>
<reference key="6">
    <citation type="journal article" date="2010" name="Biochemistry">
        <title>Biochemical and structural properties of chimeras constructed by exchange of cofactor-binding domains in alcohol dehydrogenases from thermophilic and mesophilic microorganisms.</title>
        <authorList>
            <person name="Goihberg E."/>
            <person name="Peretz M."/>
            <person name="Tel-Or S."/>
            <person name="Dym O."/>
            <person name="Shimon L."/>
            <person name="Frolow F."/>
            <person name="Burstein Y."/>
        </authorList>
    </citation>
    <scope>X-RAY CRYSTALLOGRAPHY (1.40 ANGSTROMS) IN COMPLEX WITH ZINC</scope>
    <scope>COFACTOR</scope>
    <scope>FUNCTION</scope>
    <scope>SUBUNIT</scope>
    <scope>CATALYTIC ACTIVITY</scope>
</reference>
<evidence type="ECO:0000250" key="1"/>
<evidence type="ECO:0000269" key="2">
    <source>
    </source>
</evidence>
<evidence type="ECO:0000269" key="3">
    <source>
    </source>
</evidence>
<evidence type="ECO:0000269" key="4">
    <source>
    </source>
</evidence>
<evidence type="ECO:0000303" key="5">
    <source>
    </source>
</evidence>
<evidence type="ECO:0000305" key="6"/>
<evidence type="ECO:0000312" key="7">
    <source>
        <dbReference type="EMBL" id="AAA51479.1"/>
    </source>
</evidence>
<evidence type="ECO:0000312" key="8">
    <source>
        <dbReference type="EMBL" id="EAL48121.1"/>
    </source>
</evidence>
<evidence type="ECO:0007829" key="9">
    <source>
        <dbReference type="PDB" id="2OUI"/>
    </source>
</evidence>
<evidence type="ECO:0007829" key="10">
    <source>
        <dbReference type="PDB" id="3FPC"/>
    </source>
</evidence>
<dbReference type="EC" id="1.1.1.80" evidence="4"/>
<dbReference type="EMBL" id="M88600">
    <property type="protein sequence ID" value="AAA51479.1"/>
    <property type="molecule type" value="mRNA"/>
</dbReference>
<dbReference type="EMBL" id="DS571153">
    <property type="protein sequence ID" value="EAL48121.1"/>
    <property type="molecule type" value="Genomic_DNA"/>
</dbReference>
<dbReference type="PIR" id="A46409">
    <property type="entry name" value="A46409"/>
</dbReference>
<dbReference type="RefSeq" id="XP_653507.1">
    <property type="nucleotide sequence ID" value="XM_648415.2"/>
</dbReference>
<dbReference type="PDB" id="1Y9A">
    <property type="method" value="X-ray"/>
    <property type="resolution" value="1.81 A"/>
    <property type="chains" value="A/C=7-366"/>
</dbReference>
<dbReference type="PDB" id="2OUI">
    <property type="method" value="X-ray"/>
    <property type="resolution" value="1.77 A"/>
    <property type="chains" value="A/B/C/D=7-366"/>
</dbReference>
<dbReference type="PDB" id="3FPC">
    <property type="method" value="X-ray"/>
    <property type="resolution" value="1.40 A"/>
    <property type="chains" value="A/B/C/D=159-300"/>
</dbReference>
<dbReference type="PDBsum" id="1Y9A"/>
<dbReference type="PDBsum" id="2OUI"/>
<dbReference type="PDBsum" id="3FPC"/>
<dbReference type="SMR" id="P35630"/>
<dbReference type="STRING" id="5759.C4LUM3"/>
<dbReference type="EnsemblProtists" id="GAT92322">
    <property type="protein sequence ID" value="GAT92322"/>
    <property type="gene ID" value="CL6EHI_023110"/>
</dbReference>
<dbReference type="EnsemblProtists" id="rna_EHI_023110-1">
    <property type="protein sequence ID" value="rna_EHI_023110-1"/>
    <property type="gene ID" value="EHI_023110"/>
</dbReference>
<dbReference type="GeneID" id="3407819"/>
<dbReference type="KEGG" id="ehi:EHI_023110"/>
<dbReference type="VEuPathDB" id="AmoebaDB:EHI5A_147830"/>
<dbReference type="VEuPathDB" id="AmoebaDB:EHI7A_198240"/>
<dbReference type="VEuPathDB" id="AmoebaDB:EHI8A_215180"/>
<dbReference type="VEuPathDB" id="AmoebaDB:EHI_023110"/>
<dbReference type="VEuPathDB" id="AmoebaDB:KM1_205210"/>
<dbReference type="eggNOG" id="KOG0024">
    <property type="taxonomic scope" value="Eukaryota"/>
</dbReference>
<dbReference type="HOGENOM" id="CLU_026673_11_3_1"/>
<dbReference type="OMA" id="MRATTIH"/>
<dbReference type="OrthoDB" id="256333at2759"/>
<dbReference type="BRENDA" id="1.1.1.2">
    <property type="organism ID" value="2080"/>
</dbReference>
<dbReference type="EvolutionaryTrace" id="P35630"/>
<dbReference type="Proteomes" id="UP000001926">
    <property type="component" value="Partially assembled WGS sequence"/>
</dbReference>
<dbReference type="GO" id="GO:0005737">
    <property type="term" value="C:cytoplasm"/>
    <property type="evidence" value="ECO:0007669"/>
    <property type="project" value="UniProtKB-SubCell"/>
</dbReference>
<dbReference type="GO" id="GO:0050009">
    <property type="term" value="F:isopropanol dehydrogenase (NADP+) activity"/>
    <property type="evidence" value="ECO:0007669"/>
    <property type="project" value="UniProtKB-EC"/>
</dbReference>
<dbReference type="GO" id="GO:0008270">
    <property type="term" value="F:zinc ion binding"/>
    <property type="evidence" value="ECO:0007669"/>
    <property type="project" value="InterPro"/>
</dbReference>
<dbReference type="CDD" id="cd08285">
    <property type="entry name" value="NADP_ADH"/>
    <property type="match status" value="1"/>
</dbReference>
<dbReference type="Gene3D" id="3.90.180.10">
    <property type="entry name" value="Medium-chain alcohol dehydrogenases, catalytic domain"/>
    <property type="match status" value="1"/>
</dbReference>
<dbReference type="Gene3D" id="3.40.50.720">
    <property type="entry name" value="NAD(P)-binding Rossmann-like Domain"/>
    <property type="match status" value="1"/>
</dbReference>
<dbReference type="InterPro" id="IPR013149">
    <property type="entry name" value="ADH-like_C"/>
</dbReference>
<dbReference type="InterPro" id="IPR013154">
    <property type="entry name" value="ADH-like_N"/>
</dbReference>
<dbReference type="InterPro" id="IPR002328">
    <property type="entry name" value="ADH_Zn_CS"/>
</dbReference>
<dbReference type="InterPro" id="IPR011032">
    <property type="entry name" value="GroES-like_sf"/>
</dbReference>
<dbReference type="InterPro" id="IPR036291">
    <property type="entry name" value="NAD(P)-bd_dom_sf"/>
</dbReference>
<dbReference type="InterPro" id="IPR020843">
    <property type="entry name" value="PKS_ER"/>
</dbReference>
<dbReference type="PANTHER" id="PTHR42813:SF4">
    <property type="entry name" value="NADP-DEPENDENT ISOPROPANOL DEHYDROGENASE"/>
    <property type="match status" value="1"/>
</dbReference>
<dbReference type="PANTHER" id="PTHR42813">
    <property type="entry name" value="ZINC-TYPE ALCOHOL DEHYDROGENASE-LIKE"/>
    <property type="match status" value="1"/>
</dbReference>
<dbReference type="Pfam" id="PF08240">
    <property type="entry name" value="ADH_N"/>
    <property type="match status" value="1"/>
</dbReference>
<dbReference type="Pfam" id="PF00107">
    <property type="entry name" value="ADH_zinc_N"/>
    <property type="match status" value="1"/>
</dbReference>
<dbReference type="SMART" id="SM00829">
    <property type="entry name" value="PKS_ER"/>
    <property type="match status" value="1"/>
</dbReference>
<dbReference type="SUPFAM" id="SSF50129">
    <property type="entry name" value="GroES-like"/>
    <property type="match status" value="1"/>
</dbReference>
<dbReference type="SUPFAM" id="SSF51735">
    <property type="entry name" value="NAD(P)-binding Rossmann-fold domains"/>
    <property type="match status" value="1"/>
</dbReference>
<dbReference type="PROSITE" id="PS00059">
    <property type="entry name" value="ADH_ZINC"/>
    <property type="match status" value="1"/>
</dbReference>
<keyword id="KW-0002">3D-structure</keyword>
<keyword id="KW-0963">Cytoplasm</keyword>
<keyword id="KW-0903">Direct protein sequencing</keyword>
<keyword id="KW-0479">Metal-binding</keyword>
<keyword id="KW-0521">NADP</keyword>
<keyword id="KW-0560">Oxidoreductase</keyword>
<keyword id="KW-1185">Reference proteome</keyword>
<keyword id="KW-0862">Zinc</keyword>